<dbReference type="EC" id="1.2.1.41" evidence="1"/>
<dbReference type="EMBL" id="AM408590">
    <property type="protein sequence ID" value="CAL72432.1"/>
    <property type="molecule type" value="Genomic_DNA"/>
</dbReference>
<dbReference type="RefSeq" id="WP_003412516.1">
    <property type="nucleotide sequence ID" value="NC_008769.1"/>
</dbReference>
<dbReference type="SMR" id="A1KLC0"/>
<dbReference type="KEGG" id="mbb:BCG_2444c"/>
<dbReference type="HOGENOM" id="CLU_030231_0_0_11"/>
<dbReference type="UniPathway" id="UPA00098">
    <property type="reaction ID" value="UER00360"/>
</dbReference>
<dbReference type="Proteomes" id="UP000001472">
    <property type="component" value="Chromosome"/>
</dbReference>
<dbReference type="GO" id="GO:0005737">
    <property type="term" value="C:cytoplasm"/>
    <property type="evidence" value="ECO:0007669"/>
    <property type="project" value="UniProtKB-SubCell"/>
</dbReference>
<dbReference type="GO" id="GO:0004350">
    <property type="term" value="F:glutamate-5-semialdehyde dehydrogenase activity"/>
    <property type="evidence" value="ECO:0007669"/>
    <property type="project" value="UniProtKB-UniRule"/>
</dbReference>
<dbReference type="GO" id="GO:0050661">
    <property type="term" value="F:NADP binding"/>
    <property type="evidence" value="ECO:0007669"/>
    <property type="project" value="InterPro"/>
</dbReference>
<dbReference type="GO" id="GO:0055129">
    <property type="term" value="P:L-proline biosynthetic process"/>
    <property type="evidence" value="ECO:0007669"/>
    <property type="project" value="UniProtKB-UniRule"/>
</dbReference>
<dbReference type="CDD" id="cd07079">
    <property type="entry name" value="ALDH_F18-19_ProA-GPR"/>
    <property type="match status" value="1"/>
</dbReference>
<dbReference type="FunFam" id="3.40.309.10:FF:000006">
    <property type="entry name" value="Gamma-glutamyl phosphate reductase"/>
    <property type="match status" value="1"/>
</dbReference>
<dbReference type="Gene3D" id="3.40.605.10">
    <property type="entry name" value="Aldehyde Dehydrogenase, Chain A, domain 1"/>
    <property type="match status" value="1"/>
</dbReference>
<dbReference type="Gene3D" id="3.40.309.10">
    <property type="entry name" value="Aldehyde Dehydrogenase, Chain A, domain 2"/>
    <property type="match status" value="1"/>
</dbReference>
<dbReference type="HAMAP" id="MF_00412">
    <property type="entry name" value="ProA"/>
    <property type="match status" value="1"/>
</dbReference>
<dbReference type="InterPro" id="IPR016161">
    <property type="entry name" value="Ald_DH/histidinol_DH"/>
</dbReference>
<dbReference type="InterPro" id="IPR016163">
    <property type="entry name" value="Ald_DH_C"/>
</dbReference>
<dbReference type="InterPro" id="IPR016162">
    <property type="entry name" value="Ald_DH_N"/>
</dbReference>
<dbReference type="InterPro" id="IPR015590">
    <property type="entry name" value="Aldehyde_DH_dom"/>
</dbReference>
<dbReference type="InterPro" id="IPR020593">
    <property type="entry name" value="G-glutamylP_reductase_CS"/>
</dbReference>
<dbReference type="InterPro" id="IPR012134">
    <property type="entry name" value="Glu-5-SA_DH"/>
</dbReference>
<dbReference type="InterPro" id="IPR000965">
    <property type="entry name" value="GPR_dom"/>
</dbReference>
<dbReference type="NCBIfam" id="NF001221">
    <property type="entry name" value="PRK00197.1"/>
    <property type="match status" value="1"/>
</dbReference>
<dbReference type="NCBIfam" id="TIGR00407">
    <property type="entry name" value="proA"/>
    <property type="match status" value="1"/>
</dbReference>
<dbReference type="PANTHER" id="PTHR11063:SF8">
    <property type="entry name" value="DELTA-1-PYRROLINE-5-CARBOXYLATE SYNTHASE"/>
    <property type="match status" value="1"/>
</dbReference>
<dbReference type="PANTHER" id="PTHR11063">
    <property type="entry name" value="GLUTAMATE SEMIALDEHYDE DEHYDROGENASE"/>
    <property type="match status" value="1"/>
</dbReference>
<dbReference type="Pfam" id="PF00171">
    <property type="entry name" value="Aldedh"/>
    <property type="match status" value="2"/>
</dbReference>
<dbReference type="PIRSF" id="PIRSF000151">
    <property type="entry name" value="GPR"/>
    <property type="match status" value="1"/>
</dbReference>
<dbReference type="SUPFAM" id="SSF53720">
    <property type="entry name" value="ALDH-like"/>
    <property type="match status" value="1"/>
</dbReference>
<dbReference type="PROSITE" id="PS01223">
    <property type="entry name" value="PROA"/>
    <property type="match status" value="1"/>
</dbReference>
<feature type="chain" id="PRO_1000049964" description="Gamma-glutamyl phosphate reductase">
    <location>
        <begin position="1"/>
        <end position="415"/>
    </location>
</feature>
<keyword id="KW-0028">Amino-acid biosynthesis</keyword>
<keyword id="KW-0963">Cytoplasm</keyword>
<keyword id="KW-0521">NADP</keyword>
<keyword id="KW-0560">Oxidoreductase</keyword>
<keyword id="KW-0641">Proline biosynthesis</keyword>
<proteinExistence type="inferred from homology"/>
<organism>
    <name type="scientific">Mycobacterium bovis (strain BCG / Pasteur 1173P2)</name>
    <dbReference type="NCBI Taxonomy" id="410289"/>
    <lineage>
        <taxon>Bacteria</taxon>
        <taxon>Bacillati</taxon>
        <taxon>Actinomycetota</taxon>
        <taxon>Actinomycetes</taxon>
        <taxon>Mycobacteriales</taxon>
        <taxon>Mycobacteriaceae</taxon>
        <taxon>Mycobacterium</taxon>
        <taxon>Mycobacterium tuberculosis complex</taxon>
    </lineage>
</organism>
<name>PROA_MYCBP</name>
<reference key="1">
    <citation type="journal article" date="2007" name="Proc. Natl. Acad. Sci. U.S.A.">
        <title>Genome plasticity of BCG and impact on vaccine efficacy.</title>
        <authorList>
            <person name="Brosch R."/>
            <person name="Gordon S.V."/>
            <person name="Garnier T."/>
            <person name="Eiglmeier K."/>
            <person name="Frigui W."/>
            <person name="Valenti P."/>
            <person name="Dos Santos S."/>
            <person name="Duthoy S."/>
            <person name="Lacroix C."/>
            <person name="Garcia-Pelayo C."/>
            <person name="Inwald J.K."/>
            <person name="Golby P."/>
            <person name="Garcia J.N."/>
            <person name="Hewinson R.G."/>
            <person name="Behr M.A."/>
            <person name="Quail M.A."/>
            <person name="Churcher C."/>
            <person name="Barrell B.G."/>
            <person name="Parkhill J."/>
            <person name="Cole S.T."/>
        </authorList>
    </citation>
    <scope>NUCLEOTIDE SEQUENCE [LARGE SCALE GENOMIC DNA]</scope>
    <source>
        <strain>BCG / Pasteur 1173P2</strain>
    </source>
</reference>
<protein>
    <recommendedName>
        <fullName evidence="1">Gamma-glutamyl phosphate reductase</fullName>
        <shortName evidence="1">GPR</shortName>
        <ecNumber evidence="1">1.2.1.41</ecNumber>
    </recommendedName>
    <alternativeName>
        <fullName evidence="1">Glutamate-5-semialdehyde dehydrogenase</fullName>
    </alternativeName>
    <alternativeName>
        <fullName evidence="1">Glutamyl-gamma-semialdehyde dehydrogenase</fullName>
        <shortName evidence="1">GSA dehydrogenase</shortName>
    </alternativeName>
</protein>
<accession>A1KLC0</accession>
<gene>
    <name evidence="1" type="primary">proA</name>
    <name type="ordered locus">BCG_2444c</name>
</gene>
<sequence>MTVPAPSQLDLRQEVHDAARRARVAARRLASLPTTVKDRALHAAADELLAHRDQILAANAEDLNAAREADTPAAMLDRLSLNPQRVDGIAAGLRQVAGLRDPVGEVLRGYTLPNGLQLRQQRVPLGVVGMIYEGRPNVTVDAFGLTLKSGNAALLRGSSSAAKSNEALVAVLRTALVGLELPADAVQLLSAADRATVTHLIQARGLVDVVIPRGGAGLIEAVVRDAQVPTIETGVGNCHVYVHQAADLDVAERILLNSKTRRPSVCNAAETLLVDAAIAETALPRLLAALQHAGVTVHLDPDEADLRREYLSLDIAVAVVDGVDAAIAHINEYGTGHTEAIVTTNLDAAQRFTEQIDAAAVMVNASTAFTDGEQFGFGAEIGISTQKLHARGPMGLPELTSTKWIAWGAGHTRPA</sequence>
<comment type="function">
    <text evidence="1">Catalyzes the NADPH-dependent reduction of L-glutamate 5-phosphate into L-glutamate 5-semialdehyde and phosphate. The product spontaneously undergoes cyclization to form 1-pyrroline-5-carboxylate.</text>
</comment>
<comment type="catalytic activity">
    <reaction evidence="1">
        <text>L-glutamate 5-semialdehyde + phosphate + NADP(+) = L-glutamyl 5-phosphate + NADPH + H(+)</text>
        <dbReference type="Rhea" id="RHEA:19541"/>
        <dbReference type="ChEBI" id="CHEBI:15378"/>
        <dbReference type="ChEBI" id="CHEBI:43474"/>
        <dbReference type="ChEBI" id="CHEBI:57783"/>
        <dbReference type="ChEBI" id="CHEBI:58066"/>
        <dbReference type="ChEBI" id="CHEBI:58274"/>
        <dbReference type="ChEBI" id="CHEBI:58349"/>
        <dbReference type="EC" id="1.2.1.41"/>
    </reaction>
</comment>
<comment type="pathway">
    <text evidence="1">Amino-acid biosynthesis; L-proline biosynthesis; L-glutamate 5-semialdehyde from L-glutamate: step 2/2.</text>
</comment>
<comment type="subcellular location">
    <subcellularLocation>
        <location evidence="1">Cytoplasm</location>
    </subcellularLocation>
</comment>
<comment type="similarity">
    <text evidence="1">Belongs to the gamma-glutamyl phosphate reductase family.</text>
</comment>
<evidence type="ECO:0000255" key="1">
    <source>
        <dbReference type="HAMAP-Rule" id="MF_00412"/>
    </source>
</evidence>